<sequence>MIVTTTNCIEGKKVLEYKGIVFGEVISGVDAIKDIAAGFTNFFGGRSKSYEGELIQAREEALEELKNRAYAVGANAVIGIDIDYEVLGQGGNMLMVTASGTAVVVE</sequence>
<feature type="chain" id="PRO_1000079298" description="UPF0145 protein CKL_2433">
    <location>
        <begin position="1"/>
        <end position="106"/>
    </location>
</feature>
<dbReference type="EMBL" id="CP000673">
    <property type="protein sequence ID" value="EDK34445.1"/>
    <property type="molecule type" value="Genomic_DNA"/>
</dbReference>
<dbReference type="RefSeq" id="WP_012102779.1">
    <property type="nucleotide sequence ID" value="NC_009706.1"/>
</dbReference>
<dbReference type="SMR" id="A5MZZ9"/>
<dbReference type="STRING" id="431943.CKL_2433"/>
<dbReference type="KEGG" id="ckl:CKL_2433"/>
<dbReference type="eggNOG" id="COG0393">
    <property type="taxonomic scope" value="Bacteria"/>
</dbReference>
<dbReference type="HOGENOM" id="CLU_117144_3_1_9"/>
<dbReference type="Proteomes" id="UP000002411">
    <property type="component" value="Chromosome"/>
</dbReference>
<dbReference type="Gene3D" id="3.30.110.70">
    <property type="entry name" value="Hypothetical protein apc22750. Chain B"/>
    <property type="match status" value="1"/>
</dbReference>
<dbReference type="HAMAP" id="MF_00338">
    <property type="entry name" value="UPF0145"/>
    <property type="match status" value="1"/>
</dbReference>
<dbReference type="InterPro" id="IPR035439">
    <property type="entry name" value="UPF0145_dom_sf"/>
</dbReference>
<dbReference type="InterPro" id="IPR002765">
    <property type="entry name" value="UPF0145_YbjQ-like"/>
</dbReference>
<dbReference type="PANTHER" id="PTHR34068">
    <property type="entry name" value="UPF0145 PROTEIN YBJQ"/>
    <property type="match status" value="1"/>
</dbReference>
<dbReference type="PANTHER" id="PTHR34068:SF1">
    <property type="entry name" value="UPF0145 PROTEIN YBJQ"/>
    <property type="match status" value="1"/>
</dbReference>
<dbReference type="Pfam" id="PF01906">
    <property type="entry name" value="YbjQ_1"/>
    <property type="match status" value="1"/>
</dbReference>
<dbReference type="SUPFAM" id="SSF117782">
    <property type="entry name" value="YbjQ-like"/>
    <property type="match status" value="1"/>
</dbReference>
<gene>
    <name type="ordered locus">CKL_2433</name>
</gene>
<accession>A5MZZ9</accession>
<keyword id="KW-1185">Reference proteome</keyword>
<comment type="similarity">
    <text evidence="1">Belongs to the UPF0145 family.</text>
</comment>
<protein>
    <recommendedName>
        <fullName evidence="1">UPF0145 protein CKL_2433</fullName>
    </recommendedName>
</protein>
<proteinExistence type="inferred from homology"/>
<name>Y2433_CLOK5</name>
<reference key="1">
    <citation type="journal article" date="2008" name="Proc. Natl. Acad. Sci. U.S.A.">
        <title>The genome of Clostridium kluyveri, a strict anaerobe with unique metabolic features.</title>
        <authorList>
            <person name="Seedorf H."/>
            <person name="Fricke W.F."/>
            <person name="Veith B."/>
            <person name="Brueggemann H."/>
            <person name="Liesegang H."/>
            <person name="Strittmatter A."/>
            <person name="Miethke M."/>
            <person name="Buckel W."/>
            <person name="Hinderberger J."/>
            <person name="Li F."/>
            <person name="Hagemeier C."/>
            <person name="Thauer R.K."/>
            <person name="Gottschalk G."/>
        </authorList>
    </citation>
    <scope>NUCLEOTIDE SEQUENCE [LARGE SCALE GENOMIC DNA]</scope>
    <source>
        <strain>ATCC 8527 / DSM 555 / NBRC 12016 / NCIMB 10680 / K1</strain>
    </source>
</reference>
<evidence type="ECO:0000255" key="1">
    <source>
        <dbReference type="HAMAP-Rule" id="MF_00338"/>
    </source>
</evidence>
<organism>
    <name type="scientific">Clostridium kluyveri (strain ATCC 8527 / DSM 555 / NBRC 12016 / NCIMB 10680 / K1)</name>
    <dbReference type="NCBI Taxonomy" id="431943"/>
    <lineage>
        <taxon>Bacteria</taxon>
        <taxon>Bacillati</taxon>
        <taxon>Bacillota</taxon>
        <taxon>Clostridia</taxon>
        <taxon>Eubacteriales</taxon>
        <taxon>Clostridiaceae</taxon>
        <taxon>Clostridium</taxon>
    </lineage>
</organism>